<keyword id="KW-1185">Reference proteome</keyword>
<name>SMG_PSET1</name>
<proteinExistence type="inferred from homology"/>
<comment type="similarity">
    <text evidence="1">Belongs to the Smg family.</text>
</comment>
<dbReference type="EMBL" id="CR954246">
    <property type="protein sequence ID" value="CAI85140.1"/>
    <property type="molecule type" value="Genomic_DNA"/>
</dbReference>
<dbReference type="SMR" id="Q3IDH9"/>
<dbReference type="STRING" id="326442.PSHAa0026"/>
<dbReference type="KEGG" id="pha:PSHAa0026"/>
<dbReference type="PATRIC" id="fig|326442.8.peg.28"/>
<dbReference type="eggNOG" id="COG2922">
    <property type="taxonomic scope" value="Bacteria"/>
</dbReference>
<dbReference type="HOGENOM" id="CLU_133242_0_0_6"/>
<dbReference type="BioCyc" id="PHAL326442:PSHA_RS00130-MONOMER"/>
<dbReference type="Proteomes" id="UP000006843">
    <property type="component" value="Chromosome I"/>
</dbReference>
<dbReference type="HAMAP" id="MF_00598">
    <property type="entry name" value="Smg"/>
    <property type="match status" value="1"/>
</dbReference>
<dbReference type="InterPro" id="IPR007456">
    <property type="entry name" value="Smg"/>
</dbReference>
<dbReference type="NCBIfam" id="NF002897">
    <property type="entry name" value="PRK03430.1"/>
    <property type="match status" value="1"/>
</dbReference>
<dbReference type="PANTHER" id="PTHR38692">
    <property type="entry name" value="PROTEIN SMG"/>
    <property type="match status" value="1"/>
</dbReference>
<dbReference type="PANTHER" id="PTHR38692:SF1">
    <property type="entry name" value="PROTEIN SMG"/>
    <property type="match status" value="1"/>
</dbReference>
<dbReference type="Pfam" id="PF04361">
    <property type="entry name" value="DUF494"/>
    <property type="match status" value="1"/>
</dbReference>
<organism>
    <name type="scientific">Pseudoalteromonas translucida (strain TAC 125)</name>
    <dbReference type="NCBI Taxonomy" id="326442"/>
    <lineage>
        <taxon>Bacteria</taxon>
        <taxon>Pseudomonadati</taxon>
        <taxon>Pseudomonadota</taxon>
        <taxon>Gammaproteobacteria</taxon>
        <taxon>Alteromonadales</taxon>
        <taxon>Pseudoalteromonadaceae</taxon>
        <taxon>Pseudoalteromonas</taxon>
    </lineage>
</organism>
<evidence type="ECO:0000255" key="1">
    <source>
        <dbReference type="HAMAP-Rule" id="MF_00598"/>
    </source>
</evidence>
<sequence>MFEVLMYLFENYIHNDAGLFIEPNELTDELLRAGFNQAEIFKALDWLEQLAELQHSDTSPYLITDSPQTMRIFTDHECKMLDVQCRNFLMFVERIGVTNGITREMVMDRLAALDKSFIGLDDLKWVVLMVLFNIPGAEVACEQMEDLIFDQPGDLLH</sequence>
<protein>
    <recommendedName>
        <fullName evidence="1">Protein Smg homolog</fullName>
    </recommendedName>
</protein>
<accession>Q3IDH9</accession>
<feature type="chain" id="PRO_1000025660" description="Protein Smg homolog">
    <location>
        <begin position="1"/>
        <end position="157"/>
    </location>
</feature>
<gene>
    <name evidence="1" type="primary">smg</name>
    <name type="ordered locus">PSHAa0026</name>
</gene>
<reference key="1">
    <citation type="journal article" date="2005" name="Genome Res.">
        <title>Coping with cold: the genome of the versatile marine Antarctica bacterium Pseudoalteromonas haloplanktis TAC125.</title>
        <authorList>
            <person name="Medigue C."/>
            <person name="Krin E."/>
            <person name="Pascal G."/>
            <person name="Barbe V."/>
            <person name="Bernsel A."/>
            <person name="Bertin P.N."/>
            <person name="Cheung F."/>
            <person name="Cruveiller S."/>
            <person name="D'Amico S."/>
            <person name="Duilio A."/>
            <person name="Fang G."/>
            <person name="Feller G."/>
            <person name="Ho C."/>
            <person name="Mangenot S."/>
            <person name="Marino G."/>
            <person name="Nilsson J."/>
            <person name="Parrilli E."/>
            <person name="Rocha E.P.C."/>
            <person name="Rouy Z."/>
            <person name="Sekowska A."/>
            <person name="Tutino M.L."/>
            <person name="Vallenet D."/>
            <person name="von Heijne G."/>
            <person name="Danchin A."/>
        </authorList>
    </citation>
    <scope>NUCLEOTIDE SEQUENCE [LARGE SCALE GENOMIC DNA]</scope>
    <source>
        <strain>TAC 125</strain>
    </source>
</reference>